<evidence type="ECO:0000255" key="1">
    <source>
        <dbReference type="HAMAP-Rule" id="MF_00185"/>
    </source>
</evidence>
<reference key="1">
    <citation type="journal article" date="2006" name="Science">
        <title>Genomic islands and the ecology and evolution of Prochlorococcus.</title>
        <authorList>
            <person name="Coleman M.L."/>
            <person name="Sullivan M.B."/>
            <person name="Martiny A.C."/>
            <person name="Steglich C."/>
            <person name="Barry K."/>
            <person name="Delong E.F."/>
            <person name="Chisholm S.W."/>
        </authorList>
    </citation>
    <scope>NUCLEOTIDE SEQUENCE [LARGE SCALE GENOMIC DNA]</scope>
    <source>
        <strain>MIT 9312</strain>
    </source>
</reference>
<name>MIAA_PROM9</name>
<accession>Q318A6</accession>
<keyword id="KW-0067">ATP-binding</keyword>
<keyword id="KW-0460">Magnesium</keyword>
<keyword id="KW-0547">Nucleotide-binding</keyword>
<keyword id="KW-0808">Transferase</keyword>
<keyword id="KW-0819">tRNA processing</keyword>
<gene>
    <name evidence="1" type="primary">miaA</name>
    <name type="ordered locus">PMT9312_1728</name>
</gene>
<protein>
    <recommendedName>
        <fullName evidence="1">tRNA dimethylallyltransferase</fullName>
        <ecNumber evidence="1">2.5.1.75</ecNumber>
    </recommendedName>
    <alternativeName>
        <fullName evidence="1">Dimethylallyl diphosphate:tRNA dimethylallyltransferase</fullName>
        <shortName evidence="1">DMAPP:tRNA dimethylallyltransferase</shortName>
        <shortName evidence="1">DMATase</shortName>
    </alternativeName>
    <alternativeName>
        <fullName evidence="1">Isopentenyl-diphosphate:tRNA isopentenyltransferase</fullName>
        <shortName evidence="1">IPP transferase</shortName>
        <shortName evidence="1">IPPT</shortName>
        <shortName evidence="1">IPTase</shortName>
    </alternativeName>
</protein>
<dbReference type="EC" id="2.5.1.75" evidence="1"/>
<dbReference type="EMBL" id="CP000111">
    <property type="protein sequence ID" value="ABB50789.1"/>
    <property type="molecule type" value="Genomic_DNA"/>
</dbReference>
<dbReference type="RefSeq" id="WP_011377270.1">
    <property type="nucleotide sequence ID" value="NC_007577.1"/>
</dbReference>
<dbReference type="SMR" id="Q318A6"/>
<dbReference type="STRING" id="74546.PMT9312_1728"/>
<dbReference type="KEGG" id="pmi:PMT9312_1728"/>
<dbReference type="eggNOG" id="COG0324">
    <property type="taxonomic scope" value="Bacteria"/>
</dbReference>
<dbReference type="HOGENOM" id="CLU_032616_0_1_3"/>
<dbReference type="OrthoDB" id="9776390at2"/>
<dbReference type="Proteomes" id="UP000002715">
    <property type="component" value="Chromosome"/>
</dbReference>
<dbReference type="GO" id="GO:0005524">
    <property type="term" value="F:ATP binding"/>
    <property type="evidence" value="ECO:0007669"/>
    <property type="project" value="UniProtKB-UniRule"/>
</dbReference>
<dbReference type="GO" id="GO:0052381">
    <property type="term" value="F:tRNA dimethylallyltransferase activity"/>
    <property type="evidence" value="ECO:0007669"/>
    <property type="project" value="UniProtKB-UniRule"/>
</dbReference>
<dbReference type="GO" id="GO:0006400">
    <property type="term" value="P:tRNA modification"/>
    <property type="evidence" value="ECO:0007669"/>
    <property type="project" value="TreeGrafter"/>
</dbReference>
<dbReference type="Gene3D" id="1.10.20.140">
    <property type="match status" value="1"/>
</dbReference>
<dbReference type="Gene3D" id="3.40.50.300">
    <property type="entry name" value="P-loop containing nucleotide triphosphate hydrolases"/>
    <property type="match status" value="1"/>
</dbReference>
<dbReference type="HAMAP" id="MF_00185">
    <property type="entry name" value="IPP_trans"/>
    <property type="match status" value="1"/>
</dbReference>
<dbReference type="InterPro" id="IPR039657">
    <property type="entry name" value="Dimethylallyltransferase"/>
</dbReference>
<dbReference type="InterPro" id="IPR018022">
    <property type="entry name" value="IPT"/>
</dbReference>
<dbReference type="InterPro" id="IPR027417">
    <property type="entry name" value="P-loop_NTPase"/>
</dbReference>
<dbReference type="NCBIfam" id="TIGR00174">
    <property type="entry name" value="miaA"/>
    <property type="match status" value="1"/>
</dbReference>
<dbReference type="PANTHER" id="PTHR11088">
    <property type="entry name" value="TRNA DIMETHYLALLYLTRANSFERASE"/>
    <property type="match status" value="1"/>
</dbReference>
<dbReference type="PANTHER" id="PTHR11088:SF60">
    <property type="entry name" value="TRNA DIMETHYLALLYLTRANSFERASE"/>
    <property type="match status" value="1"/>
</dbReference>
<dbReference type="Pfam" id="PF01715">
    <property type="entry name" value="IPPT"/>
    <property type="match status" value="1"/>
</dbReference>
<dbReference type="SUPFAM" id="SSF52540">
    <property type="entry name" value="P-loop containing nucleoside triphosphate hydrolases"/>
    <property type="match status" value="2"/>
</dbReference>
<organism>
    <name type="scientific">Prochlorococcus marinus (strain MIT 9312)</name>
    <dbReference type="NCBI Taxonomy" id="74546"/>
    <lineage>
        <taxon>Bacteria</taxon>
        <taxon>Bacillati</taxon>
        <taxon>Cyanobacteriota</taxon>
        <taxon>Cyanophyceae</taxon>
        <taxon>Synechococcales</taxon>
        <taxon>Prochlorococcaceae</taxon>
        <taxon>Prochlorococcus</taxon>
    </lineage>
</organism>
<comment type="function">
    <text evidence="1">Catalyzes the transfer of a dimethylallyl group onto the adenine at position 37 in tRNAs that read codons beginning with uridine, leading to the formation of N6-(dimethylallyl)adenosine (i(6)A).</text>
</comment>
<comment type="catalytic activity">
    <reaction evidence="1">
        <text>adenosine(37) in tRNA + dimethylallyl diphosphate = N(6)-dimethylallyladenosine(37) in tRNA + diphosphate</text>
        <dbReference type="Rhea" id="RHEA:26482"/>
        <dbReference type="Rhea" id="RHEA-COMP:10162"/>
        <dbReference type="Rhea" id="RHEA-COMP:10375"/>
        <dbReference type="ChEBI" id="CHEBI:33019"/>
        <dbReference type="ChEBI" id="CHEBI:57623"/>
        <dbReference type="ChEBI" id="CHEBI:74411"/>
        <dbReference type="ChEBI" id="CHEBI:74415"/>
        <dbReference type="EC" id="2.5.1.75"/>
    </reaction>
</comment>
<comment type="cofactor">
    <cofactor evidence="1">
        <name>Mg(2+)</name>
        <dbReference type="ChEBI" id="CHEBI:18420"/>
    </cofactor>
</comment>
<comment type="subunit">
    <text evidence="1">Monomer.</text>
</comment>
<comment type="similarity">
    <text evidence="1">Belongs to the IPP transferase family.</text>
</comment>
<sequence length="299" mass="34363">MSSYPPHVIVLIGATASGKTELAIEIAEYFKTRIHNIDSRQIYKSMDIGTAKPSENQQKKIKHFLIDIEEPINPINVKQFQEIAQKSIQKEIKQNNLPLLVGGSGLYMNAITKGFFVPDVPPQNNLREQLEELGQKECWELLKNCDPISAKKINLADQIRTIRALEVFYVTGKPLSSQKVQKPPQWKILELGLNRDNLKERISRRTKNMFLSGIIEETKNLISRYGSDLPILETIGYREAKDVLNNNLPIDKAIELTNIKTNQFAKRQKTWFRNKNNPIWLNNKNLLKDAIIKIESFLD</sequence>
<feature type="chain" id="PRO_1000020636" description="tRNA dimethylallyltransferase">
    <location>
        <begin position="1"/>
        <end position="299"/>
    </location>
</feature>
<feature type="region of interest" description="Interaction with substrate tRNA" evidence="1">
    <location>
        <begin position="38"/>
        <end position="41"/>
    </location>
</feature>
<feature type="binding site" evidence="1">
    <location>
        <begin position="13"/>
        <end position="20"/>
    </location>
    <ligand>
        <name>ATP</name>
        <dbReference type="ChEBI" id="CHEBI:30616"/>
    </ligand>
</feature>
<feature type="binding site" evidence="1">
    <location>
        <begin position="15"/>
        <end position="20"/>
    </location>
    <ligand>
        <name>substrate</name>
    </ligand>
</feature>
<feature type="site" description="Interaction with substrate tRNA" evidence="1">
    <location>
        <position position="104"/>
    </location>
</feature>
<proteinExistence type="inferred from homology"/>